<protein>
    <recommendedName>
        <fullName evidence="8">FAD-dependent monooxygenase ltmM</fullName>
        <ecNumber evidence="10">1.-.-.-</ecNumber>
    </recommendedName>
    <alternativeName>
        <fullName evidence="8">Lolitrem B biosynthesis cluster 1 protein M</fullName>
    </alternativeName>
</protein>
<proteinExistence type="evidence at transcript level"/>
<comment type="function">
    <text evidence="4 5 7">FAD-dependent monooxygenase; part of the gene cluster that mediates the biosynthesis of lolitrems, indole-diterpene mycotoxins that are potent tremorgens in mammals, and are synthesized by clavicipitaceous fungal endophytes in association with their grass hosts (PubMed:16765617). The geranylgeranyl diphosphate (GGPP) synthase ltmG is proposed to catalyze the first step in lolitremB biosynthesis (PubMed:15991026, PubMed:16765617). LtmG catalyzes a series of iterative condensations of isopentenyl diphosphate (IPP) with dimethylallyl diphosphate (DMAPP), geranyl diphosphate (GPP), and farnesyl diphosphate (FPP), to form GGPP (PubMed:15991026, PubMed:16765617). GGPP then condenses with indole-3-glycerol phosphate to form 3-geranylgeranylindole, an acyclic intermediate, to be incorporated into paxilline (PubMed:16765617). Either ltmG or ltmC could be responsible for this step, as both are putative prenyl transferases (PubMed:16765617). The FAD-dependent monooxygenase ltmM then catalyzes the epoxidation of the two terminal alkenes of the geranylgeranyl moiety, which is subsequently cyclized by ltmB, to paspaline (PubMed:15991026, PubMed:16765617). The cytochrome P450 monooxygenases ltmQ and ltmP can sequentially oxidize paspaline to terpendole E and terpendole F (PubMed:22750140). Alternatively, ltmP converts paspaline to an intermediate which is oxidized by ltmQ to terpendole F (PubMed:22750140). LtmF, ltmK, ltmE and ltmJ appear to be unique to the epichloe endophytes (PubMed:15991026, PubMed:16765617). The prenyltransferase ltmF is involved in the 27-hydroxyl-O-prenylation (PubMed:22750140). The cytochrome P450 monooxygenase ltmK is required for the oxidative acetal ring formation (PubMed:22750140). The multi-functional prenyltransferase ltmE is required for C20- and C21-prenylations of the indole ring of paspalanes and acts together with the cytochrome P450 monooxygenase ltmJ to yield lolitremanes by multiple oxidations and ring closures (PubMed:22750140). The stereoisomer pairs of lolitriol and lolitrem N or lolitrem B and lolitrem F may be attributed to variations in the way in which ring closure can occur under the action of ltmJ (PubMed:22750140). While the major product of this pathway is lolitrem B, the prenyl transferases and cytochrome P450 monooxygenases identified in this pathway have a remarkable versatility in their regio- and stereo-specificities to generate a diverse range of metabolites that are products of a metabolic grid rather than a linear pathway (PubMed:22750140).</text>
</comment>
<comment type="cofactor">
    <cofactor evidence="9">
        <name>FAD</name>
        <dbReference type="ChEBI" id="CHEBI:57692"/>
    </cofactor>
</comment>
<comment type="pathway">
    <text evidence="10">Secondary metabolite biosynthesis.</text>
</comment>
<comment type="subcellular location">
    <subcellularLocation>
        <location evidence="2">Membrane</location>
        <topology evidence="2">Multi-pass membrane protein</topology>
    </subcellularLocation>
</comment>
<comment type="induction">
    <text evidence="6">Expression is down-regulated when the stress-activated mitogen-activated protein kinase (sakA) is deleted (PubMed:20519633).</text>
</comment>
<comment type="similarity">
    <text evidence="9">Belongs to the paxM FAD-dependent monooxygenase family.</text>
</comment>
<dbReference type="EC" id="1.-.-.-" evidence="10"/>
<dbReference type="EMBL" id="AY742903">
    <property type="protein sequence ID" value="AAW88511.1"/>
    <property type="molecule type" value="Genomic_DNA"/>
</dbReference>
<dbReference type="SMR" id="Q56RZ6"/>
<dbReference type="GlyCosmos" id="Q56RZ6">
    <property type="glycosylation" value="1 site, No reported glycans"/>
</dbReference>
<dbReference type="GO" id="GO:0016020">
    <property type="term" value="C:membrane"/>
    <property type="evidence" value="ECO:0007669"/>
    <property type="project" value="UniProtKB-SubCell"/>
</dbReference>
<dbReference type="GO" id="GO:0071949">
    <property type="term" value="F:FAD binding"/>
    <property type="evidence" value="ECO:0007669"/>
    <property type="project" value="InterPro"/>
</dbReference>
<dbReference type="GO" id="GO:0004497">
    <property type="term" value="F:monooxygenase activity"/>
    <property type="evidence" value="ECO:0007669"/>
    <property type="project" value="UniProtKB-KW"/>
</dbReference>
<dbReference type="Gene3D" id="3.50.50.60">
    <property type="entry name" value="FAD/NAD(P)-binding domain"/>
    <property type="match status" value="1"/>
</dbReference>
<dbReference type="InterPro" id="IPR002938">
    <property type="entry name" value="FAD-bd"/>
</dbReference>
<dbReference type="InterPro" id="IPR036188">
    <property type="entry name" value="FAD/NAD-bd_sf"/>
</dbReference>
<dbReference type="InterPro" id="IPR050562">
    <property type="entry name" value="FAD_mOase_fung"/>
</dbReference>
<dbReference type="PANTHER" id="PTHR47356:SF2">
    <property type="entry name" value="FAD-BINDING DOMAIN-CONTAINING PROTEIN-RELATED"/>
    <property type="match status" value="1"/>
</dbReference>
<dbReference type="PANTHER" id="PTHR47356">
    <property type="entry name" value="FAD-DEPENDENT MONOOXYGENASE ASQG-RELATED"/>
    <property type="match status" value="1"/>
</dbReference>
<dbReference type="Pfam" id="PF01494">
    <property type="entry name" value="FAD_binding_3"/>
    <property type="match status" value="1"/>
</dbReference>
<dbReference type="PRINTS" id="PR00420">
    <property type="entry name" value="RNGMNOXGNASE"/>
</dbReference>
<dbReference type="SUPFAM" id="SSF51905">
    <property type="entry name" value="FAD/NAD(P)-binding domain"/>
    <property type="match status" value="1"/>
</dbReference>
<feature type="chain" id="PRO_0000444352" description="FAD-dependent monooxygenase ltmM">
    <location>
        <begin position="1"/>
        <end position="472"/>
    </location>
</feature>
<feature type="transmembrane region" description="Helical" evidence="2">
    <location>
        <begin position="7"/>
        <end position="27"/>
    </location>
</feature>
<feature type="transmembrane region" description="Helical" evidence="2">
    <location>
        <begin position="450"/>
        <end position="470"/>
    </location>
</feature>
<feature type="binding site" evidence="1">
    <location>
        <position position="34"/>
    </location>
    <ligand>
        <name>FAD</name>
        <dbReference type="ChEBI" id="CHEBI:57692"/>
    </ligand>
</feature>
<feature type="binding site" evidence="1">
    <location>
        <position position="48"/>
    </location>
    <ligand>
        <name>FAD</name>
        <dbReference type="ChEBI" id="CHEBI:57692"/>
    </ligand>
</feature>
<feature type="binding site" evidence="1">
    <location>
        <position position="107"/>
    </location>
    <ligand>
        <name>FAD</name>
        <dbReference type="ChEBI" id="CHEBI:57692"/>
    </ligand>
</feature>
<feature type="binding site" evidence="1">
    <location>
        <position position="306"/>
    </location>
    <ligand>
        <name>FAD</name>
        <dbReference type="ChEBI" id="CHEBI:57692"/>
    </ligand>
</feature>
<feature type="binding site" evidence="1">
    <location>
        <position position="319"/>
    </location>
    <ligand>
        <name>FAD</name>
        <dbReference type="ChEBI" id="CHEBI:57692"/>
    </ligand>
</feature>
<feature type="glycosylation site" description="N-linked (GlcNAc...) asparagine" evidence="3">
    <location>
        <position position="186"/>
    </location>
</feature>
<reference key="1">
    <citation type="journal article" date="2005" name="Mol. Genet. Genomics">
        <title>Molecular cloning and genetic analysis of a symbiosis-expressed gene cluster for lolitrem biosynthesis from a mutualistic endophyte of perennial ryegrass.</title>
        <authorList>
            <person name="Young C.A."/>
            <person name="Bryant M.K."/>
            <person name="Christensen M.J."/>
            <person name="Tapper B.A."/>
            <person name="Bryan G.T."/>
            <person name="Scott B."/>
        </authorList>
    </citation>
    <scope>NUCLEOTIDE SEQUENCE [GENOMIC DNA]</scope>
    <source>
        <strain>Lp19</strain>
    </source>
</reference>
<reference key="2">
    <citation type="journal article" date="2006" name="Fungal Genet. Biol.">
        <title>A complex gene cluster for indole-diterpene biosynthesis in the grass endophyte Neotyphodium lolii.</title>
        <authorList>
            <person name="Young C.A."/>
            <person name="Felitti S."/>
            <person name="Shields K."/>
            <person name="Spangenberg G."/>
            <person name="Johnson R.D."/>
            <person name="Bryan G.T."/>
            <person name="Saikia S."/>
            <person name="Scott B."/>
        </authorList>
    </citation>
    <scope>FUNCTION</scope>
    <source>
        <strain>Lp19</strain>
    </source>
</reference>
<reference key="3">
    <citation type="journal article" date="2010" name="Plant Physiol.">
        <title>Disruption of signaling in a fungal-grass symbiosis leads to pathogenesis.</title>
        <authorList>
            <person name="Eaton C.J."/>
            <person name="Cox M.P."/>
            <person name="Ambrose B."/>
            <person name="Becker M."/>
            <person name="Hesse U."/>
            <person name="Schardl C.L."/>
            <person name="Scott B."/>
        </authorList>
    </citation>
    <scope>INDUCTION</scope>
</reference>
<reference key="4">
    <citation type="journal article" date="2012" name="FEBS Lett.">
        <title>Functional analysis of an indole-diterpene gene cluster for lolitrem B biosynthesis in the grass endosymbiont Epichloe festucae.</title>
        <authorList>
            <person name="Saikia S."/>
            <person name="Takemoto D."/>
            <person name="Tapper B.A."/>
            <person name="Lane G.A."/>
            <person name="Fraser K."/>
            <person name="Scott B."/>
        </authorList>
    </citation>
    <scope>FUNCTION</scope>
</reference>
<gene>
    <name type="primary">ltmM</name>
</gene>
<organism>
    <name type="scientific">Epichloe festucae var. lolii</name>
    <name type="common">Neotyphodium lolii</name>
    <name type="synonym">Acremonium lolii</name>
    <dbReference type="NCBI Taxonomy" id="73839"/>
    <lineage>
        <taxon>Eukaryota</taxon>
        <taxon>Fungi</taxon>
        <taxon>Dikarya</taxon>
        <taxon>Ascomycota</taxon>
        <taxon>Pezizomycotina</taxon>
        <taxon>Sordariomycetes</taxon>
        <taxon>Hypocreomycetidae</taxon>
        <taxon>Hypocreales</taxon>
        <taxon>Clavicipitaceae</taxon>
        <taxon>Epichloe</taxon>
    </lineage>
</organism>
<evidence type="ECO:0000250" key="1">
    <source>
        <dbReference type="UniProtKB" id="B8M9J8"/>
    </source>
</evidence>
<evidence type="ECO:0000255" key="2"/>
<evidence type="ECO:0000255" key="3">
    <source>
        <dbReference type="PROSITE-ProRule" id="PRU00498"/>
    </source>
</evidence>
<evidence type="ECO:0000269" key="4">
    <source>
    </source>
</evidence>
<evidence type="ECO:0000269" key="5">
    <source>
    </source>
</evidence>
<evidence type="ECO:0000269" key="6">
    <source>
    </source>
</evidence>
<evidence type="ECO:0000269" key="7">
    <source>
    </source>
</evidence>
<evidence type="ECO:0000303" key="8">
    <source>
    </source>
</evidence>
<evidence type="ECO:0000305" key="9"/>
<evidence type="ECO:0000305" key="10">
    <source>
    </source>
</evidence>
<accession>Q56RZ6</accession>
<keyword id="KW-0274">FAD</keyword>
<keyword id="KW-0285">Flavoprotein</keyword>
<keyword id="KW-0325">Glycoprotein</keyword>
<keyword id="KW-0472">Membrane</keyword>
<keyword id="KW-0503">Monooxygenase</keyword>
<keyword id="KW-0560">Oxidoreductase</keyword>
<keyword id="KW-0812">Transmembrane</keyword>
<keyword id="KW-1133">Transmembrane helix</keyword>
<sequence>MTSDFKVIIVGGSVAGLSLAHCLEKIGVSFMVLEKGNQIAPQLGASIGILPNGGRILDQLGIFHSIEDEIEPLESAMMRYPDGFSFKSQYPQALHTSFGYPVAFLERQRFLQILYDKLKSKDCVFTNKRVVSIASGQDKVTAKTSDGAKYLADIVIGADGVHSIVRSEIWRHLKENSQISVLEAPNASIKHDYSCIYGISLNVPQIILGIQLNCLDDGVSIHLFTGKQSKLFWFVIIKTPQASFAKVEIDNTHTARCICEGLRTKKVSDTLCFEDVWSRCTIFKMTPLEEGVFKHWNYGRLACIGDAIRKMAPNNGQGANMAIEDACSLANILQKKISHGSIRDQDINSMFQEFSMAQRARTESVCAQSEFLVRMHANQGIGRRLLGRYLIPFLYDAPAGLSGFSISGATRIEFIDLPTRSLRGAWGKSWRGSWEFILQSLVYLRPKFRIVYALYLVAAAAFILYCLSSLFP</sequence>
<name>LTMM_EPIFI</name>